<evidence type="ECO:0000255" key="1">
    <source>
        <dbReference type="HAMAP-Rule" id="MF_00598"/>
    </source>
</evidence>
<accession>P0A828</accession>
<accession>P30853</accession>
<accession>Q2M6U9</accession>
<protein>
    <recommendedName>
        <fullName evidence="1">Protein Smg</fullName>
    </recommendedName>
</protein>
<organism>
    <name type="scientific">Escherichia coli (strain K12)</name>
    <dbReference type="NCBI Taxonomy" id="83333"/>
    <lineage>
        <taxon>Bacteria</taxon>
        <taxon>Pseudomonadati</taxon>
        <taxon>Pseudomonadota</taxon>
        <taxon>Gammaproteobacteria</taxon>
        <taxon>Enterobacterales</taxon>
        <taxon>Enterobacteriaceae</taxon>
        <taxon>Escherichia</taxon>
    </lineage>
</organism>
<dbReference type="EMBL" id="U18997">
    <property type="protein sequence ID" value="AAA58081.1"/>
    <property type="molecule type" value="Genomic_DNA"/>
</dbReference>
<dbReference type="EMBL" id="U00096">
    <property type="protein sequence ID" value="AAC76309.1"/>
    <property type="molecule type" value="Genomic_DNA"/>
</dbReference>
<dbReference type="EMBL" id="AP009048">
    <property type="protein sequence ID" value="BAE78007.1"/>
    <property type="molecule type" value="Genomic_DNA"/>
</dbReference>
<dbReference type="EMBL" id="X65946">
    <property type="protein sequence ID" value="CAA46764.1"/>
    <property type="status" value="ALT_SEQ"/>
    <property type="molecule type" value="Genomic_DNA"/>
</dbReference>
<dbReference type="EMBL" id="X77091">
    <property type="protein sequence ID" value="CAA54365.1"/>
    <property type="status" value="ALT_SEQ"/>
    <property type="molecule type" value="Genomic_DNA"/>
</dbReference>
<dbReference type="PIR" id="G65120">
    <property type="entry name" value="G65120"/>
</dbReference>
<dbReference type="RefSeq" id="NP_417743.1">
    <property type="nucleotide sequence ID" value="NC_000913.3"/>
</dbReference>
<dbReference type="RefSeq" id="WP_000460680.1">
    <property type="nucleotide sequence ID" value="NZ_SSZK01000040.1"/>
</dbReference>
<dbReference type="SMR" id="P0A828"/>
<dbReference type="BioGRID" id="4262455">
    <property type="interactions" value="27"/>
</dbReference>
<dbReference type="BioGRID" id="852093">
    <property type="interactions" value="1"/>
</dbReference>
<dbReference type="DIP" id="DIP-48122N"/>
<dbReference type="FunCoup" id="P0A828">
    <property type="interactions" value="88"/>
</dbReference>
<dbReference type="IntAct" id="P0A828">
    <property type="interactions" value="10"/>
</dbReference>
<dbReference type="STRING" id="511145.b3284"/>
<dbReference type="PaxDb" id="511145-b3284"/>
<dbReference type="EnsemblBacteria" id="AAC76309">
    <property type="protein sequence ID" value="AAC76309"/>
    <property type="gene ID" value="b3284"/>
</dbReference>
<dbReference type="GeneID" id="93778703"/>
<dbReference type="GeneID" id="947781"/>
<dbReference type="KEGG" id="ecj:JW3245"/>
<dbReference type="KEGG" id="eco:b3284"/>
<dbReference type="KEGG" id="ecoc:C3026_17860"/>
<dbReference type="PATRIC" id="fig|511145.12.peg.3378"/>
<dbReference type="EchoBASE" id="EB1562"/>
<dbReference type="eggNOG" id="COG2922">
    <property type="taxonomic scope" value="Bacteria"/>
</dbReference>
<dbReference type="HOGENOM" id="CLU_133242_0_0_6"/>
<dbReference type="InParanoid" id="P0A828"/>
<dbReference type="OMA" id="DLKWVVM"/>
<dbReference type="OrthoDB" id="9788984at2"/>
<dbReference type="PhylomeDB" id="P0A828"/>
<dbReference type="BioCyc" id="EcoCyc:EG11605-MONOMER"/>
<dbReference type="PRO" id="PR:P0A828"/>
<dbReference type="Proteomes" id="UP000000625">
    <property type="component" value="Chromosome"/>
</dbReference>
<dbReference type="HAMAP" id="MF_00598">
    <property type="entry name" value="Smg"/>
    <property type="match status" value="1"/>
</dbReference>
<dbReference type="InterPro" id="IPR007456">
    <property type="entry name" value="Smg"/>
</dbReference>
<dbReference type="NCBIfam" id="NF002897">
    <property type="entry name" value="PRK03430.1"/>
    <property type="match status" value="1"/>
</dbReference>
<dbReference type="PANTHER" id="PTHR38692">
    <property type="entry name" value="PROTEIN SMG"/>
    <property type="match status" value="1"/>
</dbReference>
<dbReference type="PANTHER" id="PTHR38692:SF1">
    <property type="entry name" value="PROTEIN SMG"/>
    <property type="match status" value="1"/>
</dbReference>
<dbReference type="Pfam" id="PF04361">
    <property type="entry name" value="DUF494"/>
    <property type="match status" value="1"/>
</dbReference>
<sequence length="157" mass="18510">MFDVLMYLFETYIHTEAELRVDQDKLEQDLTDAGFEREDIYNALLWLEKLADYQEGLAEPMQLASDPLSMRIYTPEECERLDASCRGFLLFLEQIQVLNLETREMVIERVLALDNAEFELDDLKWVILMVLFNIPGCENAYQQMEELLFEVNEGMLH</sequence>
<reference key="1">
    <citation type="journal article" date="1997" name="Science">
        <title>The complete genome sequence of Escherichia coli K-12.</title>
        <authorList>
            <person name="Blattner F.R."/>
            <person name="Plunkett G. III"/>
            <person name="Bloch C.A."/>
            <person name="Perna N.T."/>
            <person name="Burland V."/>
            <person name="Riley M."/>
            <person name="Collado-Vides J."/>
            <person name="Glasner J.D."/>
            <person name="Rode C.K."/>
            <person name="Mayhew G.F."/>
            <person name="Gregor J."/>
            <person name="Davis N.W."/>
            <person name="Kirkpatrick H.A."/>
            <person name="Goeden M.A."/>
            <person name="Rose D.J."/>
            <person name="Mau B."/>
            <person name="Shao Y."/>
        </authorList>
    </citation>
    <scope>NUCLEOTIDE SEQUENCE [LARGE SCALE GENOMIC DNA]</scope>
    <source>
        <strain>K12 / MG1655 / ATCC 47076</strain>
    </source>
</reference>
<reference key="2">
    <citation type="journal article" date="2006" name="Mol. Syst. Biol.">
        <title>Highly accurate genome sequences of Escherichia coli K-12 strains MG1655 and W3110.</title>
        <authorList>
            <person name="Hayashi K."/>
            <person name="Morooka N."/>
            <person name="Yamamoto Y."/>
            <person name="Fujita K."/>
            <person name="Isono K."/>
            <person name="Choi S."/>
            <person name="Ohtsubo E."/>
            <person name="Baba T."/>
            <person name="Wanner B.L."/>
            <person name="Mori H."/>
            <person name="Horiuchi T."/>
        </authorList>
    </citation>
    <scope>NUCLEOTIDE SEQUENCE [LARGE SCALE GENOMIC DNA]</scope>
    <source>
        <strain>K12 / W3110 / ATCC 27325 / DSM 5911</strain>
    </source>
</reference>
<reference key="3">
    <citation type="journal article" date="1993" name="J. Bacteriol.">
        <title>The Escherichia coli fmt gene, encoding methionyl-tRNA(fMet) formyltransferase, escapes metabolic control.</title>
        <authorList>
            <person name="Meinnel T."/>
            <person name="Guillon J.-M."/>
            <person name="Mechulam Y."/>
            <person name="Blanquet S."/>
        </authorList>
    </citation>
    <scope>NUCLEOTIDE SEQUENCE [GENOMIC DNA] OF 1-67</scope>
    <source>
        <strain>K12 / K37</strain>
    </source>
</reference>
<name>SMG_ECOLI</name>
<keyword id="KW-1185">Reference proteome</keyword>
<comment type="similarity">
    <text evidence="1">Belongs to the Smg family.</text>
</comment>
<feature type="chain" id="PRO_0000209168" description="Protein Smg">
    <location>
        <begin position="1"/>
        <end position="157"/>
    </location>
</feature>
<gene>
    <name evidence="1" type="primary">smg</name>
    <name type="ordered locus">b3284</name>
    <name type="ordered locus">JW3245</name>
</gene>
<proteinExistence type="inferred from homology"/>